<feature type="chain" id="PRO_0000127160" description="Centromere-binding protein 1">
    <location>
        <begin position="1"/>
        <end position="359"/>
    </location>
</feature>
<feature type="domain" description="bHLH" evidence="2">
    <location>
        <begin position="249"/>
        <end position="297"/>
    </location>
</feature>
<feature type="region of interest" description="Disordered" evidence="3">
    <location>
        <begin position="1"/>
        <end position="262"/>
    </location>
</feature>
<feature type="compositionally biased region" description="Basic and acidic residues" evidence="3">
    <location>
        <begin position="55"/>
        <end position="78"/>
    </location>
</feature>
<feature type="compositionally biased region" description="Acidic residues" evidence="3">
    <location>
        <begin position="120"/>
        <end position="161"/>
    </location>
</feature>
<feature type="compositionally biased region" description="Basic and acidic residues" evidence="3">
    <location>
        <begin position="249"/>
        <end position="259"/>
    </location>
</feature>
<feature type="sequence conflict" description="In Ref. 1; CAA53618." evidence="4" ref="1">
    <original>E</original>
    <variation>Q</variation>
    <location>
        <position position="341"/>
    </location>
</feature>
<accession>P49379</accession>
<accession>Q6CV96</accession>
<comment type="function">
    <text evidence="1">Required for chromosome stability and methionine prototrophy. It is involved in chromosomal segregation. Binds to a highly conserved DNA sequence (5'-RTCACRTG-3'), called CDEI, found in centromeres and in several promoters (By similarity).</text>
</comment>
<comment type="subunit">
    <text evidence="1">Binds DNA as a dimer.</text>
</comment>
<comment type="interaction">
    <interactant intactId="EBI-15956272">
        <id>P49379</id>
    </interactant>
    <interactant intactId="EBI-15956087">
        <id>Q6CPM4</id>
        <label>KLLA0_E03807g</label>
    </interactant>
    <organismsDiffer>false</organismsDiffer>
    <experiments>3</experiments>
</comment>
<comment type="subcellular location">
    <subcellularLocation>
        <location>Nucleus</location>
    </subcellularLocation>
    <subcellularLocation>
        <location>Chromosome</location>
        <location>Centromere</location>
    </subcellularLocation>
</comment>
<comment type="sequence caution" evidence="4">
    <conflict type="frameshift">
        <sequence resource="EMBL-CDS" id="CAA53618"/>
    </conflict>
</comment>
<sequence>MSGKRSYQDDQLDVEEANKRHQMVDTLLRGSEDKDGDNDNSVYDDLLQDPEEVEKENKENRDGDKVGDDEHDVVKGESEGQAAEQSSADQNDENINVDVDPSVTAVARAAQHASQRREAGDEDEDEDEEEEEDEDDHVDIDDVDKDPDAVIDEDDDEEDEDQAQRRRGKKNIEGTGESNDSERATKIGESGSSNETAGADGSGDREDGSQPDGTEHDDEENGGAGAGGAAPRRGRKPGTETGSTAWKQQRKESHKEVERRRRQNINTAIEKLSDLLPVKETSKAAILSRAAEYIQKMKETETANIEKWTLQKLLGEQQVSSLTSANDKLEQELSKAYKNLEELKKKLKEAGIEDPTEEE</sequence>
<gene>
    <name type="primary">CBF1</name>
    <name type="synonym">CPF1</name>
    <name type="ordered locus">KLLA0B13761g</name>
</gene>
<protein>
    <recommendedName>
        <fullName>Centromere-binding protein 1</fullName>
        <shortName>CBP-1</shortName>
    </recommendedName>
    <alternativeName>
        <fullName>Centromere promoter factor 1</fullName>
    </alternativeName>
    <alternativeName>
        <fullName>Centromere-binding factor 1</fullName>
    </alternativeName>
</protein>
<proteinExistence type="evidence at protein level"/>
<dbReference type="EMBL" id="X76028">
    <property type="protein sequence ID" value="CAA53618.1"/>
    <property type="status" value="ALT_FRAME"/>
    <property type="molecule type" value="Genomic_DNA"/>
</dbReference>
<dbReference type="EMBL" id="CR382122">
    <property type="protein sequence ID" value="CAH02536.1"/>
    <property type="molecule type" value="Genomic_DNA"/>
</dbReference>
<dbReference type="PIR" id="S48231">
    <property type="entry name" value="S48231"/>
</dbReference>
<dbReference type="RefSeq" id="XP_452143.1">
    <property type="nucleotide sequence ID" value="XM_452143.1"/>
</dbReference>
<dbReference type="SMR" id="P49379"/>
<dbReference type="DIP" id="DIP-59576N"/>
<dbReference type="IntAct" id="P49379">
    <property type="interactions" value="4"/>
</dbReference>
<dbReference type="STRING" id="284590.P49379"/>
<dbReference type="PaxDb" id="284590-P49379"/>
<dbReference type="KEGG" id="kla:KLLA0_B13761g"/>
<dbReference type="eggNOG" id="KOG1318">
    <property type="taxonomic scope" value="Eukaryota"/>
</dbReference>
<dbReference type="HOGENOM" id="CLU_046871_0_1_1"/>
<dbReference type="InParanoid" id="P49379"/>
<dbReference type="OMA" id="HEENMES"/>
<dbReference type="Proteomes" id="UP000000598">
    <property type="component" value="Chromosome B"/>
</dbReference>
<dbReference type="GO" id="GO:0000775">
    <property type="term" value="C:chromosome, centromeric region"/>
    <property type="evidence" value="ECO:0007669"/>
    <property type="project" value="UniProtKB-SubCell"/>
</dbReference>
<dbReference type="GO" id="GO:0005634">
    <property type="term" value="C:nucleus"/>
    <property type="evidence" value="ECO:0007669"/>
    <property type="project" value="UniProtKB-SubCell"/>
</dbReference>
<dbReference type="GO" id="GO:0003677">
    <property type="term" value="F:DNA binding"/>
    <property type="evidence" value="ECO:0007669"/>
    <property type="project" value="UniProtKB-KW"/>
</dbReference>
<dbReference type="GO" id="GO:0003700">
    <property type="term" value="F:DNA-binding transcription factor activity"/>
    <property type="evidence" value="ECO:0007669"/>
    <property type="project" value="InterPro"/>
</dbReference>
<dbReference type="GO" id="GO:0046983">
    <property type="term" value="F:protein dimerization activity"/>
    <property type="evidence" value="ECO:0007669"/>
    <property type="project" value="InterPro"/>
</dbReference>
<dbReference type="CDD" id="cd11398">
    <property type="entry name" value="bHLHzip_scCBP1"/>
    <property type="match status" value="1"/>
</dbReference>
<dbReference type="Gene3D" id="4.10.280.10">
    <property type="entry name" value="Helix-loop-helix DNA-binding domain"/>
    <property type="match status" value="1"/>
</dbReference>
<dbReference type="InterPro" id="IPR011598">
    <property type="entry name" value="bHLH_dom"/>
</dbReference>
<dbReference type="InterPro" id="IPR047206">
    <property type="entry name" value="bHLHzip_scCBP1-like"/>
</dbReference>
<dbReference type="InterPro" id="IPR036638">
    <property type="entry name" value="HLH_DNA-bd_sf"/>
</dbReference>
<dbReference type="PANTHER" id="PTHR47787">
    <property type="entry name" value="CENTROMERE-BINDING PROTEIN 1"/>
    <property type="match status" value="1"/>
</dbReference>
<dbReference type="PANTHER" id="PTHR47787:SF1">
    <property type="entry name" value="CENTROMERE-BINDING PROTEIN 1"/>
    <property type="match status" value="1"/>
</dbReference>
<dbReference type="Pfam" id="PF00010">
    <property type="entry name" value="HLH"/>
    <property type="match status" value="1"/>
</dbReference>
<dbReference type="SMART" id="SM00353">
    <property type="entry name" value="HLH"/>
    <property type="match status" value="1"/>
</dbReference>
<dbReference type="SUPFAM" id="SSF47459">
    <property type="entry name" value="HLH, helix-loop-helix DNA-binding domain"/>
    <property type="match status" value="1"/>
</dbReference>
<dbReference type="PROSITE" id="PS50888">
    <property type="entry name" value="BHLH"/>
    <property type="match status" value="1"/>
</dbReference>
<name>CBF1_KLULA</name>
<evidence type="ECO:0000250" key="1"/>
<evidence type="ECO:0000255" key="2">
    <source>
        <dbReference type="PROSITE-ProRule" id="PRU00981"/>
    </source>
</evidence>
<evidence type="ECO:0000256" key="3">
    <source>
        <dbReference type="SAM" id="MobiDB-lite"/>
    </source>
</evidence>
<evidence type="ECO:0000305" key="4"/>
<reference key="1">
    <citation type="journal article" date="1994" name="Curr. Genet.">
        <title>Centromere promoter factors (CPF1) of the yeasts Saccharomyces cerevisiae and Kluyveromyces lactis are functionally exchangeable, despite low overall homology.</title>
        <authorList>
            <person name="Mulder W."/>
            <person name="Winkler A.A."/>
            <person name="Scholten I.H.J.M."/>
            <person name="Zonneveld B.J.M."/>
            <person name="de Winde J.H."/>
            <person name="de Steensma H.Y."/>
            <person name="Grivell L.A."/>
        </authorList>
    </citation>
    <scope>NUCLEOTIDE SEQUENCE [GENOMIC DNA]</scope>
</reference>
<reference key="2">
    <citation type="journal article" date="2004" name="Nature">
        <title>Genome evolution in yeasts.</title>
        <authorList>
            <person name="Dujon B."/>
            <person name="Sherman D."/>
            <person name="Fischer G."/>
            <person name="Durrens P."/>
            <person name="Casaregola S."/>
            <person name="Lafontaine I."/>
            <person name="de Montigny J."/>
            <person name="Marck C."/>
            <person name="Neuveglise C."/>
            <person name="Talla E."/>
            <person name="Goffard N."/>
            <person name="Frangeul L."/>
            <person name="Aigle M."/>
            <person name="Anthouard V."/>
            <person name="Babour A."/>
            <person name="Barbe V."/>
            <person name="Barnay S."/>
            <person name="Blanchin S."/>
            <person name="Beckerich J.-M."/>
            <person name="Beyne E."/>
            <person name="Bleykasten C."/>
            <person name="Boisrame A."/>
            <person name="Boyer J."/>
            <person name="Cattolico L."/>
            <person name="Confanioleri F."/>
            <person name="de Daruvar A."/>
            <person name="Despons L."/>
            <person name="Fabre E."/>
            <person name="Fairhead C."/>
            <person name="Ferry-Dumazet H."/>
            <person name="Groppi A."/>
            <person name="Hantraye F."/>
            <person name="Hennequin C."/>
            <person name="Jauniaux N."/>
            <person name="Joyet P."/>
            <person name="Kachouri R."/>
            <person name="Kerrest A."/>
            <person name="Koszul R."/>
            <person name="Lemaire M."/>
            <person name="Lesur I."/>
            <person name="Ma L."/>
            <person name="Muller H."/>
            <person name="Nicaud J.-M."/>
            <person name="Nikolski M."/>
            <person name="Oztas S."/>
            <person name="Ozier-Kalogeropoulos O."/>
            <person name="Pellenz S."/>
            <person name="Potier S."/>
            <person name="Richard G.-F."/>
            <person name="Straub M.-L."/>
            <person name="Suleau A."/>
            <person name="Swennen D."/>
            <person name="Tekaia F."/>
            <person name="Wesolowski-Louvel M."/>
            <person name="Westhof E."/>
            <person name="Wirth B."/>
            <person name="Zeniou-Meyer M."/>
            <person name="Zivanovic Y."/>
            <person name="Bolotin-Fukuhara M."/>
            <person name="Thierry A."/>
            <person name="Bouchier C."/>
            <person name="Caudron B."/>
            <person name="Scarpelli C."/>
            <person name="Gaillardin C."/>
            <person name="Weissenbach J."/>
            <person name="Wincker P."/>
            <person name="Souciet J.-L."/>
        </authorList>
    </citation>
    <scope>NUCLEOTIDE SEQUENCE [LARGE SCALE GENOMIC DNA]</scope>
    <source>
        <strain>ATCC 8585 / CBS 2359 / DSM 70799 / NBRC 1267 / NRRL Y-1140 / WM37</strain>
    </source>
</reference>
<organism>
    <name type="scientific">Kluyveromyces lactis (strain ATCC 8585 / CBS 2359 / DSM 70799 / NBRC 1267 / NRRL Y-1140 / WM37)</name>
    <name type="common">Yeast</name>
    <name type="synonym">Candida sphaerica</name>
    <dbReference type="NCBI Taxonomy" id="284590"/>
    <lineage>
        <taxon>Eukaryota</taxon>
        <taxon>Fungi</taxon>
        <taxon>Dikarya</taxon>
        <taxon>Ascomycota</taxon>
        <taxon>Saccharomycotina</taxon>
        <taxon>Saccharomycetes</taxon>
        <taxon>Saccharomycetales</taxon>
        <taxon>Saccharomycetaceae</taxon>
        <taxon>Kluyveromyces</taxon>
    </lineage>
</organism>
<keyword id="KW-0137">Centromere</keyword>
<keyword id="KW-0158">Chromosome</keyword>
<keyword id="KW-0238">DNA-binding</keyword>
<keyword id="KW-0539">Nucleus</keyword>
<keyword id="KW-1185">Reference proteome</keyword>